<dbReference type="EMBL" id="AC003113">
    <property type="protein sequence ID" value="AAF70851.1"/>
    <property type="molecule type" value="Genomic_DNA"/>
</dbReference>
<dbReference type="EMBL" id="CP002684">
    <property type="protein sequence ID" value="AEE33953.1"/>
    <property type="status" value="ALT_SEQ"/>
    <property type="molecule type" value="Genomic_DNA"/>
</dbReference>
<dbReference type="EMBL" id="CP002684">
    <property type="protein sequence ID" value="ANM61021.1"/>
    <property type="molecule type" value="Genomic_DNA"/>
</dbReference>
<dbReference type="EMBL" id="CP002684">
    <property type="protein sequence ID" value="ANM61023.1"/>
    <property type="molecule type" value="Genomic_DNA"/>
</dbReference>
<dbReference type="PIR" id="H96649">
    <property type="entry name" value="H96649"/>
</dbReference>
<dbReference type="PIR" id="T01441">
    <property type="entry name" value="T01441"/>
</dbReference>
<dbReference type="RefSeq" id="NP_001319293.1">
    <property type="nucleotide sequence ID" value="NM_001334028.1"/>
</dbReference>
<dbReference type="RefSeq" id="NP_001323266.1">
    <property type="nucleotide sequence ID" value="NM_001334030.1"/>
</dbReference>
<dbReference type="RefSeq" id="NP_001323268.1">
    <property type="nucleotide sequence ID" value="NM_001334032.1"/>
</dbReference>
<dbReference type="SMR" id="F4HYR3"/>
<dbReference type="BioGRID" id="27751">
    <property type="interactions" value="2"/>
</dbReference>
<dbReference type="FunCoup" id="F4HYR3">
    <property type="interactions" value="501"/>
</dbReference>
<dbReference type="IntAct" id="F4HYR3">
    <property type="interactions" value="2"/>
</dbReference>
<dbReference type="STRING" id="3702.F4HYR3"/>
<dbReference type="GlyGen" id="F4HYR3">
    <property type="glycosylation" value="1 site"/>
</dbReference>
<dbReference type="iPTMnet" id="F4HYR3"/>
<dbReference type="PaxDb" id="3702-AT1G62320.1"/>
<dbReference type="ProteomicsDB" id="220349"/>
<dbReference type="EnsemblPlants" id="AT1G62320.3">
    <property type="protein sequence ID" value="AT1G62320.3"/>
    <property type="gene ID" value="AT1G62320"/>
</dbReference>
<dbReference type="EnsemblPlants" id="AT1G62320.5">
    <property type="protein sequence ID" value="AT1G62320.5"/>
    <property type="gene ID" value="AT1G62320"/>
</dbReference>
<dbReference type="GeneID" id="842530"/>
<dbReference type="Gramene" id="AT1G62320.3">
    <property type="protein sequence ID" value="AT1G62320.3"/>
    <property type="gene ID" value="AT1G62320"/>
</dbReference>
<dbReference type="Gramene" id="AT1G62320.5">
    <property type="protein sequence ID" value="AT1G62320.5"/>
    <property type="gene ID" value="AT1G62320"/>
</dbReference>
<dbReference type="KEGG" id="ath:AT1G62320"/>
<dbReference type="Araport" id="AT1G62320"/>
<dbReference type="TAIR" id="AT1G62320"/>
<dbReference type="eggNOG" id="KOG1134">
    <property type="taxonomic scope" value="Eukaryota"/>
</dbReference>
<dbReference type="InParanoid" id="F4HYR3"/>
<dbReference type="OMA" id="VMEYAFT"/>
<dbReference type="PhylomeDB" id="F4HYR3"/>
<dbReference type="PRO" id="PR:F4HYR3"/>
<dbReference type="Proteomes" id="UP000006548">
    <property type="component" value="Chromosome 1"/>
</dbReference>
<dbReference type="ExpressionAtlas" id="F4HYR3">
    <property type="expression patterns" value="baseline and differential"/>
</dbReference>
<dbReference type="GO" id="GO:0016020">
    <property type="term" value="C:membrane"/>
    <property type="evidence" value="ECO:0007669"/>
    <property type="project" value="UniProtKB-SubCell"/>
</dbReference>
<dbReference type="GO" id="GO:0005227">
    <property type="term" value="F:calcium-activated cation channel activity"/>
    <property type="evidence" value="ECO:0007669"/>
    <property type="project" value="InterPro"/>
</dbReference>
<dbReference type="InterPro" id="IPR045122">
    <property type="entry name" value="Csc1-like"/>
</dbReference>
<dbReference type="InterPro" id="IPR003864">
    <property type="entry name" value="CSC1/OSCA1-like_7TM"/>
</dbReference>
<dbReference type="InterPro" id="IPR027815">
    <property type="entry name" value="CSC1/OSCA1-like_cyt"/>
</dbReference>
<dbReference type="InterPro" id="IPR032880">
    <property type="entry name" value="Csc1/OSCA1-like_N"/>
</dbReference>
<dbReference type="PANTHER" id="PTHR13018:SF115">
    <property type="entry name" value="(RAPE) HYPOTHETICAL PROTEIN"/>
    <property type="match status" value="1"/>
</dbReference>
<dbReference type="PANTHER" id="PTHR13018">
    <property type="entry name" value="PROBABLE MEMBRANE PROTEIN DUF221-RELATED"/>
    <property type="match status" value="1"/>
</dbReference>
<dbReference type="Pfam" id="PF14703">
    <property type="entry name" value="PHM7_cyt"/>
    <property type="match status" value="1"/>
</dbReference>
<dbReference type="Pfam" id="PF02714">
    <property type="entry name" value="RSN1_7TM"/>
    <property type="match status" value="1"/>
</dbReference>
<dbReference type="Pfam" id="PF13967">
    <property type="entry name" value="RSN1_TM"/>
    <property type="match status" value="1"/>
</dbReference>
<proteinExistence type="inferred from homology"/>
<reference key="1">
    <citation type="journal article" date="2000" name="Nature">
        <title>Sequence and analysis of chromosome 1 of the plant Arabidopsis thaliana.</title>
        <authorList>
            <person name="Theologis A."/>
            <person name="Ecker J.R."/>
            <person name="Palm C.J."/>
            <person name="Federspiel N.A."/>
            <person name="Kaul S."/>
            <person name="White O."/>
            <person name="Alonso J."/>
            <person name="Altafi H."/>
            <person name="Araujo R."/>
            <person name="Bowman C.L."/>
            <person name="Brooks S.Y."/>
            <person name="Buehler E."/>
            <person name="Chan A."/>
            <person name="Chao Q."/>
            <person name="Chen H."/>
            <person name="Cheuk R.F."/>
            <person name="Chin C.W."/>
            <person name="Chung M.K."/>
            <person name="Conn L."/>
            <person name="Conway A.B."/>
            <person name="Conway A.R."/>
            <person name="Creasy T.H."/>
            <person name="Dewar K."/>
            <person name="Dunn P."/>
            <person name="Etgu P."/>
            <person name="Feldblyum T.V."/>
            <person name="Feng J.-D."/>
            <person name="Fong B."/>
            <person name="Fujii C.Y."/>
            <person name="Gill J.E."/>
            <person name="Goldsmith A.D."/>
            <person name="Haas B."/>
            <person name="Hansen N.F."/>
            <person name="Hughes B."/>
            <person name="Huizar L."/>
            <person name="Hunter J.L."/>
            <person name="Jenkins J."/>
            <person name="Johnson-Hopson C."/>
            <person name="Khan S."/>
            <person name="Khaykin E."/>
            <person name="Kim C.J."/>
            <person name="Koo H.L."/>
            <person name="Kremenetskaia I."/>
            <person name="Kurtz D.B."/>
            <person name="Kwan A."/>
            <person name="Lam B."/>
            <person name="Langin-Hooper S."/>
            <person name="Lee A."/>
            <person name="Lee J.M."/>
            <person name="Lenz C.A."/>
            <person name="Li J.H."/>
            <person name="Li Y.-P."/>
            <person name="Lin X."/>
            <person name="Liu S.X."/>
            <person name="Liu Z.A."/>
            <person name="Luros J.S."/>
            <person name="Maiti R."/>
            <person name="Marziali A."/>
            <person name="Militscher J."/>
            <person name="Miranda M."/>
            <person name="Nguyen M."/>
            <person name="Nierman W.C."/>
            <person name="Osborne B.I."/>
            <person name="Pai G."/>
            <person name="Peterson J."/>
            <person name="Pham P.K."/>
            <person name="Rizzo M."/>
            <person name="Rooney T."/>
            <person name="Rowley D."/>
            <person name="Sakano H."/>
            <person name="Salzberg S.L."/>
            <person name="Schwartz J.R."/>
            <person name="Shinn P."/>
            <person name="Southwick A.M."/>
            <person name="Sun H."/>
            <person name="Tallon L.J."/>
            <person name="Tambunga G."/>
            <person name="Toriumi M.J."/>
            <person name="Town C.D."/>
            <person name="Utterback T."/>
            <person name="Van Aken S."/>
            <person name="Vaysberg M."/>
            <person name="Vysotskaia V.S."/>
            <person name="Walker M."/>
            <person name="Wu D."/>
            <person name="Yu G."/>
            <person name="Fraser C.M."/>
            <person name="Venter J.C."/>
            <person name="Davis R.W."/>
        </authorList>
    </citation>
    <scope>NUCLEOTIDE SEQUENCE [LARGE SCALE GENOMIC DNA]</scope>
    <source>
        <strain>cv. Columbia</strain>
    </source>
</reference>
<reference key="2">
    <citation type="journal article" date="2017" name="Plant J.">
        <title>Araport11: a complete reannotation of the Arabidopsis thaliana reference genome.</title>
        <authorList>
            <person name="Cheng C.Y."/>
            <person name="Krishnakumar V."/>
            <person name="Chan A.P."/>
            <person name="Thibaud-Nissen F."/>
            <person name="Schobel S."/>
            <person name="Town C.D."/>
        </authorList>
    </citation>
    <scope>GENOME REANNOTATION</scope>
    <source>
        <strain>cv. Columbia</strain>
    </source>
</reference>
<reference key="3">
    <citation type="journal article" date="2014" name="Cell Res.">
        <title>DUF221 proteins are a family of osmosensitive calcium-permeable cation channels conserved across eukaryotes.</title>
        <authorList>
            <person name="Hou C."/>
            <person name="Tian W."/>
            <person name="Kleist T."/>
            <person name="He K."/>
            <person name="Garcia V."/>
            <person name="Bai F."/>
            <person name="Hao Y."/>
            <person name="Luan S."/>
            <person name="Li L."/>
        </authorList>
    </citation>
    <scope>GENE FAMILY</scope>
</reference>
<reference key="4">
    <citation type="journal article" date="2020" name="Nature">
        <title>The calcium-permeable channel OSCA1.3 regulates plant stomatal immunity.</title>
        <authorList>
            <person name="Thor K."/>
            <person name="Jiang S."/>
            <person name="Michard E."/>
            <person name="George J."/>
            <person name="Scherzer S."/>
            <person name="Huang S."/>
            <person name="Dindas J."/>
            <person name="Derbyshire P."/>
            <person name="Leitao N."/>
            <person name="DeFalco T.A."/>
            <person name="Koester P."/>
            <person name="Hunter K."/>
            <person name="Kimura S."/>
            <person name="Gronnier J."/>
            <person name="Stransfeld L."/>
            <person name="Kadota Y."/>
            <person name="Buecherl C.A."/>
            <person name="Charpentier M."/>
            <person name="Wrzaczek M."/>
            <person name="MacLean D."/>
            <person name="Oldroyd G.E.D."/>
            <person name="Menke F.L.H."/>
            <person name="Roelfsema M.R.G."/>
            <person name="Hedrich R."/>
            <person name="Feijo J."/>
            <person name="Zipfel C."/>
        </authorList>
    </citation>
    <scope>GENE FAMILY</scope>
</reference>
<protein>
    <recommendedName>
        <fullName evidence="4">Hyperosmolality-gated Ca2+ permeable channel 1.4</fullName>
        <shortName evidence="4">AtOSCA1.4</shortName>
    </recommendedName>
</protein>
<sequence length="778" mass="89309">MATLADIGLAAAINILSALIFLLLFAILRIQPFNDRVYFPKWYLKGVRSSPVNSGAFVSKIMNLDFRSYVRFLNWMPDALKMPEPELIDHAGLDSAVYLRIYLIGLKIFGPIALLSWSILVPVNWTSDGLQLAKLRNVTSSNIDKLSISNVERGSDRFWAHLVMAYAFTFWTCYVLMKEYEKIAAMRLSFLQSEKRRADQFTVLVRNVPPDSDESISENVQHFFLVNHPDHYLTHQVVYNANELAKLVEDKKKMQNWLDYYQLKYTRNKEQRPRVKMGFLGLWGKKVDAMDHYTAEIEKLSEQIMEERKRIKKDDKSVMQAAFVSFKTRWGAAVCAQTQQTKNPTEWLTEWAPEAREMYWPNLAMPYVSLTVRRFVMHIAFFFLTFFFIIPIAFVQSLASIEGIEKSAPFLSPIVKNKLMKSLIQGFLPGIVLKLFLIFLPTILMIMSKFEGFISISSLERRAAFRYYIFNLVNVFLGSVITGSAFEQLDSFLKQSANDIPRTVGVAIPIKATFFITYIMVDGWAGVAGEIFRLKPLVIFHLKNFFFVKTEKDREEAMDPGQIDFYATEPRIQLYFLLGLVYAPVTPVLLPFIIFFFGFAYLVFRHQIINVYNQKYESAGAFWPDVHGRIISALIISQILLLGLMSTKGKVQSTPFLLVLAILTFGFHRFCKGRYESAFVINPLQEAMIKDTLERAREPNLNLKGFLQNAYVHPVFKDEEDSDEEGLIEDSDDEDCVVVQTKRQRSRRTTVASSNASRGSSQSTPFNQLDLGKGKPET</sequence>
<feature type="chain" id="PRO_0000429804" description="Hyperosmolality-gated Ca2+ permeable channel 1.4">
    <location>
        <begin position="1"/>
        <end position="778"/>
    </location>
</feature>
<feature type="transmembrane region" description="Helical" evidence="2">
    <location>
        <begin position="7"/>
        <end position="27"/>
    </location>
</feature>
<feature type="transmembrane region" description="Helical" evidence="2">
    <location>
        <begin position="101"/>
        <end position="121"/>
    </location>
</feature>
<feature type="transmembrane region" description="Helical" evidence="2">
    <location>
        <begin position="158"/>
        <end position="178"/>
    </location>
</feature>
<feature type="transmembrane region" description="Helical" evidence="2">
    <location>
        <begin position="375"/>
        <end position="395"/>
    </location>
</feature>
<feature type="transmembrane region" description="Helical" evidence="2">
    <location>
        <begin position="427"/>
        <end position="447"/>
    </location>
</feature>
<feature type="transmembrane region" description="Helical" evidence="2">
    <location>
        <begin position="467"/>
        <end position="487"/>
    </location>
</feature>
<feature type="transmembrane region" description="Helical" evidence="2">
    <location>
        <begin position="512"/>
        <end position="532"/>
    </location>
</feature>
<feature type="transmembrane region" description="Helical" evidence="2">
    <location>
        <begin position="584"/>
        <end position="604"/>
    </location>
</feature>
<feature type="transmembrane region" description="Helical" evidence="2">
    <location>
        <begin position="626"/>
        <end position="646"/>
    </location>
</feature>
<feature type="transmembrane region" description="Helical" evidence="2">
    <location>
        <begin position="651"/>
        <end position="671"/>
    </location>
</feature>
<feature type="region of interest" description="Disordered" evidence="3">
    <location>
        <begin position="738"/>
        <end position="778"/>
    </location>
</feature>
<feature type="compositionally biased region" description="Low complexity" evidence="3">
    <location>
        <begin position="753"/>
        <end position="763"/>
    </location>
</feature>
<accession>F4HYR3</accession>
<accession>Q9MAV5</accession>
<name>OSC14_ARATH</name>
<comment type="function">
    <text evidence="1">Acts as an osmosensitive calcium-permeable cation channel.</text>
</comment>
<comment type="subcellular location">
    <subcellularLocation>
        <location evidence="5">Membrane</location>
        <topology evidence="5">Multi-pass membrane protein</topology>
    </subcellularLocation>
</comment>
<comment type="similarity">
    <text evidence="5">Belongs to the CSC1 (TC 1.A.17) family.</text>
</comment>
<comment type="sequence caution" evidence="5">
    <conflict type="erroneous gene model prediction">
        <sequence resource="EMBL-CDS" id="AEE33953"/>
    </conflict>
</comment>
<keyword id="KW-0106">Calcium</keyword>
<keyword id="KW-0407">Ion channel</keyword>
<keyword id="KW-0406">Ion transport</keyword>
<keyword id="KW-0472">Membrane</keyword>
<keyword id="KW-1185">Reference proteome</keyword>
<keyword id="KW-0812">Transmembrane</keyword>
<keyword id="KW-1133">Transmembrane helix</keyword>
<keyword id="KW-0813">Transport</keyword>
<organism>
    <name type="scientific">Arabidopsis thaliana</name>
    <name type="common">Mouse-ear cress</name>
    <dbReference type="NCBI Taxonomy" id="3702"/>
    <lineage>
        <taxon>Eukaryota</taxon>
        <taxon>Viridiplantae</taxon>
        <taxon>Streptophyta</taxon>
        <taxon>Embryophyta</taxon>
        <taxon>Tracheophyta</taxon>
        <taxon>Spermatophyta</taxon>
        <taxon>Magnoliopsida</taxon>
        <taxon>eudicotyledons</taxon>
        <taxon>Gunneridae</taxon>
        <taxon>Pentapetalae</taxon>
        <taxon>rosids</taxon>
        <taxon>malvids</taxon>
        <taxon>Brassicales</taxon>
        <taxon>Brassicaceae</taxon>
        <taxon>Camelineae</taxon>
        <taxon>Arabidopsis</taxon>
    </lineage>
</organism>
<evidence type="ECO:0000250" key="1">
    <source>
        <dbReference type="UniProtKB" id="Q5XEZ5"/>
    </source>
</evidence>
<evidence type="ECO:0000255" key="2"/>
<evidence type="ECO:0000256" key="3">
    <source>
        <dbReference type="SAM" id="MobiDB-lite"/>
    </source>
</evidence>
<evidence type="ECO:0000303" key="4">
    <source>
    </source>
</evidence>
<evidence type="ECO:0000305" key="5"/>
<gene>
    <name evidence="4" type="primary">OSCA1.4</name>
    <name type="ordered locus">At1g62320</name>
    <name type="ORF">F24O1.4</name>
</gene>